<name>MUTS_VIBC1</name>
<dbReference type="EMBL" id="CP000789">
    <property type="protein sequence ID" value="ABU72451.1"/>
    <property type="molecule type" value="Genomic_DNA"/>
</dbReference>
<dbReference type="RefSeq" id="WP_012128906.1">
    <property type="nucleotide sequence ID" value="NC_009783.1"/>
</dbReference>
<dbReference type="SMR" id="A7MTT8"/>
<dbReference type="KEGG" id="vha:VIBHAR_03515"/>
<dbReference type="PATRIC" id="fig|338187.25.peg.2695"/>
<dbReference type="Proteomes" id="UP000008152">
    <property type="component" value="Chromosome I"/>
</dbReference>
<dbReference type="GO" id="GO:0005829">
    <property type="term" value="C:cytosol"/>
    <property type="evidence" value="ECO:0007669"/>
    <property type="project" value="TreeGrafter"/>
</dbReference>
<dbReference type="GO" id="GO:0005524">
    <property type="term" value="F:ATP binding"/>
    <property type="evidence" value="ECO:0007669"/>
    <property type="project" value="UniProtKB-UniRule"/>
</dbReference>
<dbReference type="GO" id="GO:0140664">
    <property type="term" value="F:ATP-dependent DNA damage sensor activity"/>
    <property type="evidence" value="ECO:0007669"/>
    <property type="project" value="InterPro"/>
</dbReference>
<dbReference type="GO" id="GO:0003684">
    <property type="term" value="F:damaged DNA binding"/>
    <property type="evidence" value="ECO:0007669"/>
    <property type="project" value="UniProtKB-UniRule"/>
</dbReference>
<dbReference type="GO" id="GO:0030983">
    <property type="term" value="F:mismatched DNA binding"/>
    <property type="evidence" value="ECO:0007669"/>
    <property type="project" value="InterPro"/>
</dbReference>
<dbReference type="GO" id="GO:0006298">
    <property type="term" value="P:mismatch repair"/>
    <property type="evidence" value="ECO:0007669"/>
    <property type="project" value="UniProtKB-UniRule"/>
</dbReference>
<dbReference type="CDD" id="cd03284">
    <property type="entry name" value="ABC_MutS1"/>
    <property type="match status" value="1"/>
</dbReference>
<dbReference type="FunFam" id="1.10.1420.10:FF:000002">
    <property type="entry name" value="DNA mismatch repair protein MutS"/>
    <property type="match status" value="1"/>
</dbReference>
<dbReference type="FunFam" id="3.30.420.110:FF:000001">
    <property type="entry name" value="DNA mismatch repair protein MutS"/>
    <property type="match status" value="1"/>
</dbReference>
<dbReference type="FunFam" id="3.40.1170.10:FF:000001">
    <property type="entry name" value="DNA mismatch repair protein MutS"/>
    <property type="match status" value="1"/>
</dbReference>
<dbReference type="FunFam" id="3.40.50.300:FF:000283">
    <property type="entry name" value="DNA mismatch repair protein MutS"/>
    <property type="match status" value="1"/>
</dbReference>
<dbReference type="Gene3D" id="1.10.1420.10">
    <property type="match status" value="2"/>
</dbReference>
<dbReference type="Gene3D" id="6.10.140.430">
    <property type="match status" value="1"/>
</dbReference>
<dbReference type="Gene3D" id="3.40.1170.10">
    <property type="entry name" value="DNA repair protein MutS, domain I"/>
    <property type="match status" value="1"/>
</dbReference>
<dbReference type="Gene3D" id="3.30.420.110">
    <property type="entry name" value="MutS, connector domain"/>
    <property type="match status" value="1"/>
</dbReference>
<dbReference type="Gene3D" id="3.40.50.300">
    <property type="entry name" value="P-loop containing nucleotide triphosphate hydrolases"/>
    <property type="match status" value="1"/>
</dbReference>
<dbReference type="HAMAP" id="MF_00096">
    <property type="entry name" value="MutS"/>
    <property type="match status" value="1"/>
</dbReference>
<dbReference type="InterPro" id="IPR005748">
    <property type="entry name" value="DNA_mismatch_repair_MutS"/>
</dbReference>
<dbReference type="InterPro" id="IPR007695">
    <property type="entry name" value="DNA_mismatch_repair_MutS-lik_N"/>
</dbReference>
<dbReference type="InterPro" id="IPR017261">
    <property type="entry name" value="DNA_mismatch_repair_MutS/MSH"/>
</dbReference>
<dbReference type="InterPro" id="IPR000432">
    <property type="entry name" value="DNA_mismatch_repair_MutS_C"/>
</dbReference>
<dbReference type="InterPro" id="IPR007861">
    <property type="entry name" value="DNA_mismatch_repair_MutS_clamp"/>
</dbReference>
<dbReference type="InterPro" id="IPR007696">
    <property type="entry name" value="DNA_mismatch_repair_MutS_core"/>
</dbReference>
<dbReference type="InterPro" id="IPR016151">
    <property type="entry name" value="DNA_mismatch_repair_MutS_N"/>
</dbReference>
<dbReference type="InterPro" id="IPR036187">
    <property type="entry name" value="DNA_mismatch_repair_MutS_sf"/>
</dbReference>
<dbReference type="InterPro" id="IPR007860">
    <property type="entry name" value="DNA_mmatch_repair_MutS_con_dom"/>
</dbReference>
<dbReference type="InterPro" id="IPR045076">
    <property type="entry name" value="MutS"/>
</dbReference>
<dbReference type="InterPro" id="IPR036678">
    <property type="entry name" value="MutS_con_dom_sf"/>
</dbReference>
<dbReference type="InterPro" id="IPR027417">
    <property type="entry name" value="P-loop_NTPase"/>
</dbReference>
<dbReference type="NCBIfam" id="TIGR01070">
    <property type="entry name" value="mutS1"/>
    <property type="match status" value="1"/>
</dbReference>
<dbReference type="NCBIfam" id="NF003810">
    <property type="entry name" value="PRK05399.1"/>
    <property type="match status" value="1"/>
</dbReference>
<dbReference type="PANTHER" id="PTHR11361:SF34">
    <property type="entry name" value="DNA MISMATCH REPAIR PROTEIN MSH1, MITOCHONDRIAL"/>
    <property type="match status" value="1"/>
</dbReference>
<dbReference type="PANTHER" id="PTHR11361">
    <property type="entry name" value="DNA MISMATCH REPAIR PROTEIN MUTS FAMILY MEMBER"/>
    <property type="match status" value="1"/>
</dbReference>
<dbReference type="Pfam" id="PF01624">
    <property type="entry name" value="MutS_I"/>
    <property type="match status" value="1"/>
</dbReference>
<dbReference type="Pfam" id="PF05188">
    <property type="entry name" value="MutS_II"/>
    <property type="match status" value="1"/>
</dbReference>
<dbReference type="Pfam" id="PF05192">
    <property type="entry name" value="MutS_III"/>
    <property type="match status" value="1"/>
</dbReference>
<dbReference type="Pfam" id="PF05190">
    <property type="entry name" value="MutS_IV"/>
    <property type="match status" value="1"/>
</dbReference>
<dbReference type="Pfam" id="PF00488">
    <property type="entry name" value="MutS_V"/>
    <property type="match status" value="1"/>
</dbReference>
<dbReference type="PIRSF" id="PIRSF037677">
    <property type="entry name" value="DNA_mis_repair_Msh6"/>
    <property type="match status" value="1"/>
</dbReference>
<dbReference type="SMART" id="SM00534">
    <property type="entry name" value="MUTSac"/>
    <property type="match status" value="1"/>
</dbReference>
<dbReference type="SMART" id="SM00533">
    <property type="entry name" value="MUTSd"/>
    <property type="match status" value="1"/>
</dbReference>
<dbReference type="SUPFAM" id="SSF55271">
    <property type="entry name" value="DNA repair protein MutS, domain I"/>
    <property type="match status" value="1"/>
</dbReference>
<dbReference type="SUPFAM" id="SSF53150">
    <property type="entry name" value="DNA repair protein MutS, domain II"/>
    <property type="match status" value="1"/>
</dbReference>
<dbReference type="SUPFAM" id="SSF48334">
    <property type="entry name" value="DNA repair protein MutS, domain III"/>
    <property type="match status" value="1"/>
</dbReference>
<dbReference type="SUPFAM" id="SSF52540">
    <property type="entry name" value="P-loop containing nucleoside triphosphate hydrolases"/>
    <property type="match status" value="1"/>
</dbReference>
<dbReference type="PROSITE" id="PS00486">
    <property type="entry name" value="DNA_MISMATCH_REPAIR_2"/>
    <property type="match status" value="1"/>
</dbReference>
<proteinExistence type="inferred from homology"/>
<comment type="function">
    <text evidence="1">This protein is involved in the repair of mismatches in DNA. It is possible that it carries out the mismatch recognition step. This protein has a weak ATPase activity.</text>
</comment>
<comment type="similarity">
    <text evidence="1">Belongs to the DNA mismatch repair MutS family.</text>
</comment>
<keyword id="KW-0067">ATP-binding</keyword>
<keyword id="KW-0227">DNA damage</keyword>
<keyword id="KW-0234">DNA repair</keyword>
<keyword id="KW-0238">DNA-binding</keyword>
<keyword id="KW-0547">Nucleotide-binding</keyword>
<gene>
    <name evidence="1" type="primary">mutS</name>
    <name type="ordered locus">VIBHAR_03515</name>
</gene>
<sequence length="853" mass="94836">MKAEQKHTPMMQQYLKLKAENPEILLFYRMGDFYELFYDDAKRASQLLDISLTKRGASAGEPIPMAGVPFHAVEGYLAKLVQLGESVAICEQIGDPATSKGPVERKVVRIVTPGTVTDEALLSERIDNLIAAIYQHNGKFGYATLDVTSGRFQLVEPETEEAMAAELQRTAPRELLFPEDFEAVHLMSNRNGNRRRPVWEFELDTAKQQLNQQFGTRDLVGFGVEHASLGLCAAGCLIQYVKDTQRTALPHIRSLTFDRQDHSVILDAATRRNLELTQNLSGGTDNTLAEVLDHCATPMGSRMLKRWLHQPMRCVDTLNNRLDAIGEIKDQSLFTDIQPIFKQIGDIERILARLALRSARPRDMARLRHAMQQLPELEAVTSSLAHPYLKKLAQFAAPMDEVCDLLERAIKENPPVVIREGGVIAEGYNAELDEWRKLADGATEYLEKLEADERERHGIDTLKVGYNAVHGFFIQVSRGQSHLVPPHYVRRQTLKNAERYIIPELKEHEDKVLNSKSKALAVEKKLWEELFDLLMPNLEKIQNLASAISQLDVLQNLAERADSLDYCRPTLNKEAGISIQAGRHPVVEQVTSEPFIANPIELSSNRKMLIITGPNMGGKSTYMRQTALIALMAHIGSYVPAESAHIGSLDRIFTRIGASDDLASGRSTFMVEMTETANILHNATKNSLVLMDEIGRGTSTYDGLSLAWASAEWLATQIGAMTLFATHYFELTELPNLLPNLANVHLDAVEHGDSIAFMHAVQEGAASKSYGLAVAGLAGVPKPVIKNARNKLSQLEQLGQGNDSARPSTVDVANQLSLIPEPSDVEQALSNIDPDDLTPRQALEELYRLKKML</sequence>
<reference key="1">
    <citation type="submission" date="2007-08" db="EMBL/GenBank/DDBJ databases">
        <authorList>
            <consortium name="The Vibrio harveyi Genome Sequencing Project"/>
            <person name="Bassler B."/>
            <person name="Clifton S.W."/>
            <person name="Fulton L."/>
            <person name="Delehaunty K."/>
            <person name="Fronick C."/>
            <person name="Harrison M."/>
            <person name="Markivic C."/>
            <person name="Fulton R."/>
            <person name="Tin-Wollam A.-M."/>
            <person name="Shah N."/>
            <person name="Pepin K."/>
            <person name="Nash W."/>
            <person name="Thiruvilangam P."/>
            <person name="Bhonagiri V."/>
            <person name="Waters C."/>
            <person name="Tu K.C."/>
            <person name="Irgon J."/>
            <person name="Wilson R.K."/>
        </authorList>
    </citation>
    <scope>NUCLEOTIDE SEQUENCE [LARGE SCALE GENOMIC DNA]</scope>
    <source>
        <strain>ATCC BAA-1116 / BB120</strain>
    </source>
</reference>
<accession>A7MTT8</accession>
<organism>
    <name type="scientific">Vibrio campbellii (strain ATCC BAA-1116)</name>
    <dbReference type="NCBI Taxonomy" id="2902295"/>
    <lineage>
        <taxon>Bacteria</taxon>
        <taxon>Pseudomonadati</taxon>
        <taxon>Pseudomonadota</taxon>
        <taxon>Gammaproteobacteria</taxon>
        <taxon>Vibrionales</taxon>
        <taxon>Vibrionaceae</taxon>
        <taxon>Vibrio</taxon>
    </lineage>
</organism>
<evidence type="ECO:0000255" key="1">
    <source>
        <dbReference type="HAMAP-Rule" id="MF_00096"/>
    </source>
</evidence>
<feature type="chain" id="PRO_1000008116" description="DNA mismatch repair protein MutS">
    <location>
        <begin position="1"/>
        <end position="853"/>
    </location>
</feature>
<feature type="binding site" evidence="1">
    <location>
        <begin position="613"/>
        <end position="620"/>
    </location>
    <ligand>
        <name>ATP</name>
        <dbReference type="ChEBI" id="CHEBI:30616"/>
    </ligand>
</feature>
<protein>
    <recommendedName>
        <fullName evidence="1">DNA mismatch repair protein MutS</fullName>
    </recommendedName>
</protein>